<reference key="1">
    <citation type="journal article" date="2007" name="Proc. Natl. Acad. Sci. U.S.A.">
        <title>Genome sequencing and comparative analysis of Saccharomyces cerevisiae strain YJM789.</title>
        <authorList>
            <person name="Wei W."/>
            <person name="McCusker J.H."/>
            <person name="Hyman R.W."/>
            <person name="Jones T."/>
            <person name="Ning Y."/>
            <person name="Cao Z."/>
            <person name="Gu Z."/>
            <person name="Bruno D."/>
            <person name="Miranda M."/>
            <person name="Nguyen M."/>
            <person name="Wilhelmy J."/>
            <person name="Komp C."/>
            <person name="Tamse R."/>
            <person name="Wang X."/>
            <person name="Jia P."/>
            <person name="Luedi P."/>
            <person name="Oefner P.J."/>
            <person name="David L."/>
            <person name="Dietrich F.S."/>
            <person name="Li Y."/>
            <person name="Davis R.W."/>
            <person name="Steinmetz L.M."/>
        </authorList>
    </citation>
    <scope>NUCLEOTIDE SEQUENCE [LARGE SCALE GENOMIC DNA]</scope>
    <source>
        <strain>YJM789</strain>
    </source>
</reference>
<feature type="chain" id="PRO_0000324487" description="Protein SSH4">
    <location>
        <begin position="1"/>
        <end position="579"/>
    </location>
</feature>
<feature type="topological domain" description="Cytoplasmic" evidence="3">
    <location>
        <begin position="1"/>
        <end position="44"/>
    </location>
</feature>
<feature type="transmembrane region" description="Helical; Signal-anchor for type II membrane protein" evidence="3">
    <location>
        <begin position="45"/>
        <end position="65"/>
    </location>
</feature>
<feature type="topological domain" description="Lumenal" evidence="3">
    <location>
        <begin position="66"/>
        <end position="579"/>
    </location>
</feature>
<feature type="domain" description="B30.2/SPRY" evidence="4">
    <location>
        <begin position="166"/>
        <end position="364"/>
    </location>
</feature>
<feature type="region of interest" description="Disordered" evidence="5">
    <location>
        <begin position="499"/>
        <end position="579"/>
    </location>
</feature>
<feature type="compositionally biased region" description="Low complexity" evidence="5">
    <location>
        <begin position="509"/>
        <end position="525"/>
    </location>
</feature>
<feature type="compositionally biased region" description="Basic residues" evidence="5">
    <location>
        <begin position="555"/>
        <end position="579"/>
    </location>
</feature>
<feature type="modified residue" description="Phosphoserine" evidence="2">
    <location>
        <position position="358"/>
    </location>
</feature>
<feature type="glycosylation site" description="N-linked (GlcNAc...) asparagine" evidence="3">
    <location>
        <position position="212"/>
    </location>
</feature>
<feature type="glycosylation site" description="N-linked (GlcNAc...) asparagine" evidence="3">
    <location>
        <position position="356"/>
    </location>
</feature>
<feature type="glycosylation site" description="N-linked (GlcNAc...) asparagine" evidence="3">
    <location>
        <position position="430"/>
    </location>
</feature>
<feature type="glycosylation site" description="N-linked (GlcNAc...) asparagine" evidence="3">
    <location>
        <position position="507"/>
    </location>
</feature>
<feature type="glycosylation site" description="N-linked (GlcNAc...) asparagine" evidence="3">
    <location>
        <position position="557"/>
    </location>
</feature>
<feature type="glycosylation site" description="N-linked (GlcNAc...) asparagine" evidence="3">
    <location>
        <position position="575"/>
    </location>
</feature>
<feature type="cross-link" description="Glycyl lysine isopeptide (Lys-Gly) (interchain with G-Cter in ubiquitin)" evidence="2">
    <location>
        <position position="367"/>
    </location>
</feature>
<evidence type="ECO:0000250" key="1"/>
<evidence type="ECO:0000250" key="2">
    <source>
        <dbReference type="UniProtKB" id="P32343"/>
    </source>
</evidence>
<evidence type="ECO:0000255" key="3"/>
<evidence type="ECO:0000255" key="4">
    <source>
        <dbReference type="PROSITE-ProRule" id="PRU00548"/>
    </source>
</evidence>
<evidence type="ECO:0000256" key="5">
    <source>
        <dbReference type="SAM" id="MobiDB-lite"/>
    </source>
</evidence>
<evidence type="ECO:0000305" key="6"/>
<name>SSH4_YEAS7</name>
<proteinExistence type="inferred from homology"/>
<dbReference type="EMBL" id="AAFW02000151">
    <property type="protein sequence ID" value="EDN60044.1"/>
    <property type="molecule type" value="Genomic_DNA"/>
</dbReference>
<dbReference type="SMR" id="A6ZZJ6"/>
<dbReference type="GlyCosmos" id="A6ZZJ6">
    <property type="glycosylation" value="6 sites, No reported glycans"/>
</dbReference>
<dbReference type="HOGENOM" id="CLU_026177_0_0_1"/>
<dbReference type="OrthoDB" id="38714at4893"/>
<dbReference type="Proteomes" id="UP000007060">
    <property type="component" value="Unassembled WGS sequence"/>
</dbReference>
<dbReference type="GO" id="GO:0010008">
    <property type="term" value="C:endosome membrane"/>
    <property type="evidence" value="ECO:0007669"/>
    <property type="project" value="UniProtKB-SubCell"/>
</dbReference>
<dbReference type="GO" id="GO:0005774">
    <property type="term" value="C:vacuolar membrane"/>
    <property type="evidence" value="ECO:0007669"/>
    <property type="project" value="UniProtKB-SubCell"/>
</dbReference>
<dbReference type="GO" id="GO:0015031">
    <property type="term" value="P:protein transport"/>
    <property type="evidence" value="ECO:0007669"/>
    <property type="project" value="UniProtKB-KW"/>
</dbReference>
<dbReference type="Gene3D" id="2.60.120.920">
    <property type="match status" value="1"/>
</dbReference>
<dbReference type="InterPro" id="IPR001870">
    <property type="entry name" value="B30.2/SPRY"/>
</dbReference>
<dbReference type="InterPro" id="IPR043136">
    <property type="entry name" value="B30.2/SPRY_sf"/>
</dbReference>
<dbReference type="InterPro" id="IPR013320">
    <property type="entry name" value="ConA-like_dom_sf"/>
</dbReference>
<dbReference type="InterPro" id="IPR003877">
    <property type="entry name" value="SPRY_dom"/>
</dbReference>
<dbReference type="InterPro" id="IPR050618">
    <property type="entry name" value="Ubq-SigPath_Reg"/>
</dbReference>
<dbReference type="PANTHER" id="PTHR12864">
    <property type="entry name" value="RAN BINDING PROTEIN 9-RELATED"/>
    <property type="match status" value="1"/>
</dbReference>
<dbReference type="Pfam" id="PF00622">
    <property type="entry name" value="SPRY"/>
    <property type="match status" value="1"/>
</dbReference>
<dbReference type="SMART" id="SM00449">
    <property type="entry name" value="SPRY"/>
    <property type="match status" value="1"/>
</dbReference>
<dbReference type="SUPFAM" id="SSF49899">
    <property type="entry name" value="Concanavalin A-like lectins/glucanases"/>
    <property type="match status" value="1"/>
</dbReference>
<dbReference type="PROSITE" id="PS50188">
    <property type="entry name" value="B302_SPRY"/>
    <property type="match status" value="1"/>
</dbReference>
<keyword id="KW-0967">Endosome</keyword>
<keyword id="KW-0325">Glycoprotein</keyword>
<keyword id="KW-1017">Isopeptide bond</keyword>
<keyword id="KW-0472">Membrane</keyword>
<keyword id="KW-0597">Phosphoprotein</keyword>
<keyword id="KW-0653">Protein transport</keyword>
<keyword id="KW-0735">Signal-anchor</keyword>
<keyword id="KW-0812">Transmembrane</keyword>
<keyword id="KW-1133">Transmembrane helix</keyword>
<keyword id="KW-0813">Transport</keyword>
<keyword id="KW-0832">Ubl conjugation</keyword>
<keyword id="KW-0926">Vacuole</keyword>
<accession>A6ZZJ6</accession>
<protein>
    <recommendedName>
        <fullName>Protein SSH4</fullName>
    </recommendedName>
    <alternativeName>
        <fullName>Multicopy suppressor of leflunomide protein 4</fullName>
    </alternativeName>
    <alternativeName>
        <fullName>Suppressor of SHR3 null mutation protein 4</fullName>
    </alternativeName>
</protein>
<organism>
    <name type="scientific">Saccharomyces cerevisiae (strain YJM789)</name>
    <name type="common">Baker's yeast</name>
    <dbReference type="NCBI Taxonomy" id="307796"/>
    <lineage>
        <taxon>Eukaryota</taxon>
        <taxon>Fungi</taxon>
        <taxon>Dikarya</taxon>
        <taxon>Ascomycota</taxon>
        <taxon>Saccharomycotina</taxon>
        <taxon>Saccharomycetes</taxon>
        <taxon>Saccharomycetales</taxon>
        <taxon>Saccharomycetaceae</taxon>
        <taxon>Saccharomyces</taxon>
    </lineage>
</organism>
<comment type="function">
    <text evidence="1">Components of the endosome-vacuole trafficking pathway that regulates nutrient transport. May be involved in processes which determine whether plasma membrane proteins are degraded or routed to the plasma membrane. Confers leflunomide resistance when overexpressed (By similarity).</text>
</comment>
<comment type="subcellular location">
    <subcellularLocation>
        <location evidence="1">Vacuole membrane</location>
        <topology evidence="1">Single-pass type II membrane protein</topology>
    </subcellularLocation>
    <subcellularLocation>
        <location evidence="1">Endosome membrane</location>
        <topology evidence="1">Single-pass type II membrane protein</topology>
    </subcellularLocation>
</comment>
<comment type="similarity">
    <text evidence="6">Belongs to the SSH4 family.</text>
</comment>
<gene>
    <name type="primary">SSH4</name>
    <name type="synonym">MLF4</name>
    <name type="ORF">SCY_3256</name>
</gene>
<sequence>MYVTFNEALDSSFGNLESPNHDFKVGDPNMVPTPPMDSDSAAISLAFLISLSITFAILMLILVVIAAYVTFCGDDESEYDEENALGTRTSGTLHSLFGKKHSGILLDSSFASPGGFDDEIVLQERELEELPKMSAYEVELYIRAKEFQMMSPPMVKDFGTYLDSDDQQFIKDRGIQSYFLLPSINDNIDEYGNFLPSFIVQDKLDIQFSKFNKSSSTVMNYPLPHNRKDAVYFEVKIFRHIQKSNSIFSIGLTTVPYPYFRVPGMAKYSIAYESTGKLRINNPFTASTLLPKLEEGDTVGFGYRYKTGTIFITHNGKKLMDVTQNIGIDLFIGIGAFNAAYTRTYTRDGLLEDPDNVSFREALSEGKDIEVAKDLQRVHDPHDDSDEMTSDEVELHVNLGQVGFVFIEANVKKYAFGSVYGQIGIPPAYNGTEIKKDTILQKGEELPPRYADTDNFFGSMKVKEGSSSRITAQTSKPLWSVGTYERISSNFDRENNVYHDSLETDDNNTDNNVNNNDENAGCNENSPLLEDDGNKRPENSNTPREVSDGAINKNPRNKSTKKRQRNRGKSSKKKNRSRK</sequence>